<feature type="signal peptide" evidence="4">
    <location>
        <begin position="1"/>
        <end position="24"/>
    </location>
</feature>
<feature type="chain" id="PRO_0000396802" description="Listeriolysin O">
    <location>
        <begin position="25"/>
        <end position="529"/>
    </location>
</feature>
<feature type="transmembrane region" description="Beta stranded" evidence="3">
    <location>
        <begin position="214"/>
        <end position="227"/>
    </location>
</feature>
<feature type="transmembrane region" description="Beta stranded" evidence="3">
    <location>
        <begin position="234"/>
        <end position="243"/>
    </location>
</feature>
<feature type="transmembrane region" description="Beta stranded" evidence="3">
    <location>
        <begin position="312"/>
        <end position="321"/>
    </location>
</feature>
<feature type="transmembrane region" description="Beta stranded" evidence="3">
    <location>
        <begin position="329"/>
        <end position="341"/>
    </location>
</feature>
<feature type="short sequence motif" description="Conserved undecapeptide" evidence="5">
    <location>
        <begin position="483"/>
        <end position="493"/>
    </location>
</feature>
<feature type="short sequence motif" description="Cholesterol binding" evidence="1">
    <location>
        <begin position="515"/>
        <end position="516"/>
    </location>
</feature>
<comment type="function">
    <text evidence="2">A cholesterol-dependent toxin that causes cytolysis by forming pores in cholesterol containing host membranes. After binding to target membranes, the protein undergoes a major conformation change, leading to its insertion in the host membrane and formation of an oligomeric pore complex. Cholesterol is required for binding to host membranes, membrane insertion and pore formation; cholesterol binding is mediated by a Thr-Leu pair in the C-terminus. Acts as a major virulence factor required for the escape of bacteria from phagosomal vacuoles and entry into the host cytosol. Can be reversibly inactivated by oxidation.</text>
</comment>
<comment type="activity regulation">
    <text evidence="2">Activity of listeriolysin O is regulated on multiple levels. It should be high in the phagosome, thereby allowing escape of the bacteria from the phagosomal compartment. Then, once inside the host cytosol, the activity must be controlled to prevent lysis of the host plasma membrane and loss of the intracellular environment.</text>
</comment>
<comment type="subunit">
    <text evidence="3">Homooligomeric pore complex of 35 to 50 subunits; when inserted in the host membrane.</text>
</comment>
<comment type="subcellular location">
    <subcellularLocation>
        <location evidence="2">Secreted</location>
    </subcellularLocation>
    <subcellularLocation>
        <location evidence="2">Host membrane</location>
        <topology evidence="3">Multi-pass membrane protein</topology>
    </subcellularLocation>
    <subcellularLocation>
        <location evidence="2">Host cell membrane</location>
        <topology evidence="3">Multi-pass membrane protein</topology>
    </subcellularLocation>
    <text evidence="3">Secreted as soluble protein that then inserts into the host membrane and forms pores formed by transmembrane beta-strands.</text>
</comment>
<comment type="similarity">
    <text evidence="5">Belongs to the cholesterol-dependent cytolysin family.</text>
</comment>
<gene>
    <name type="primary">hly</name>
    <name type="ordered locus">Lm4b_00200</name>
</gene>
<proteinExistence type="inferred from homology"/>
<evidence type="ECO:0000250" key="1">
    <source>
        <dbReference type="UniProtKB" id="P0C2E9"/>
    </source>
</evidence>
<evidence type="ECO:0000250" key="2">
    <source>
        <dbReference type="UniProtKB" id="P13128"/>
    </source>
</evidence>
<evidence type="ECO:0000250" key="3">
    <source>
        <dbReference type="UniProtKB" id="Q04IN8"/>
    </source>
</evidence>
<evidence type="ECO:0000255" key="4"/>
<evidence type="ECO:0000305" key="5"/>
<accession>C1KYD5</accession>
<sequence length="529" mass="58710">MKKIMLVFITLILVSLPIAQQTEAKDASAFHKENLISSMAPPASPPASPKTPIEKKHADEIDKYIQGLDYNKNNVLVYHGDAVTNVPPRKGYKDGNEYIVVEKKKKSINQNNADIQVVNAISSLTYPGALVKANSELVENQPDVLPVKRDSLTLSIDLPGMTNQDNKIVVKNATKSNVNNAVNTLVERWNEKYAQAYPNVSAKIDYDDEMAYSESQLIAKFGTAFKAVNNSLNVNFGAISEGKMQEEVISFKQIYYNVNVNEPTRPSRFFGKAVTKEQLQALGVNAENPPAYISSVAYGRQVYLKLSTNSHSTKVKAAFDAAVSGKSVSGDVELTNIIKNSSFKAVIYGGSAKDEVQIIDGNLGDLRDILKKGATFNRETPGVPIAYTTNFLKDNELAVIKNNSEYIETTSKAYTDGKINIDHSGGYVAQFNISWDEINYDPEGNEIVQHKNWSENNKSKLAHFTSSIYLPGNARNINVYAKECTGLAWEWWRTVIDDRNLPLVKNRNISIWGTTLYPKYSNSVDNPIE</sequence>
<organism>
    <name type="scientific">Listeria monocytogenes serotype 4b (strain CLIP80459)</name>
    <dbReference type="NCBI Taxonomy" id="568819"/>
    <lineage>
        <taxon>Bacteria</taxon>
        <taxon>Bacillati</taxon>
        <taxon>Bacillota</taxon>
        <taxon>Bacilli</taxon>
        <taxon>Bacillales</taxon>
        <taxon>Listeriaceae</taxon>
        <taxon>Listeria</taxon>
    </lineage>
</organism>
<protein>
    <recommendedName>
        <fullName>Listeriolysin O</fullName>
    </recommendedName>
    <alternativeName>
        <fullName>LLO</fullName>
    </alternativeName>
    <alternativeName>
        <fullName>Thiol-activated cytolysin</fullName>
    </alternativeName>
</protein>
<keyword id="KW-0204">Cytolysis</keyword>
<keyword id="KW-0354">Hemolysis</keyword>
<keyword id="KW-1032">Host cell membrane</keyword>
<keyword id="KW-1043">Host membrane</keyword>
<keyword id="KW-0446">Lipid-binding</keyword>
<keyword id="KW-0472">Membrane</keyword>
<keyword id="KW-0964">Secreted</keyword>
<keyword id="KW-0732">Signal</keyword>
<keyword id="KW-0800">Toxin</keyword>
<keyword id="KW-0812">Transmembrane</keyword>
<keyword id="KW-1134">Transmembrane beta strand</keyword>
<keyword id="KW-0843">Virulence</keyword>
<name>TACY_LISMC</name>
<reference key="1">
    <citation type="journal article" date="2012" name="BMC Genomics">
        <title>Comparative genomics and transcriptomics of lineages I, II, and III strains of Listeria monocytogenes.</title>
        <authorList>
            <person name="Hain T."/>
            <person name="Ghai R."/>
            <person name="Billion A."/>
            <person name="Kuenne C.T."/>
            <person name="Steinweg C."/>
            <person name="Izar B."/>
            <person name="Mohamed W."/>
            <person name="Mraheil M."/>
            <person name="Domann E."/>
            <person name="Schaffrath S."/>
            <person name="Karst U."/>
            <person name="Goesmann A."/>
            <person name="Oehm S."/>
            <person name="Puhler A."/>
            <person name="Merkl R."/>
            <person name="Vorwerk S."/>
            <person name="Glaser P."/>
            <person name="Garrido P."/>
            <person name="Rusniok C."/>
            <person name="Buchrieser C."/>
            <person name="Goebel W."/>
            <person name="Chakraborty T."/>
        </authorList>
    </citation>
    <scope>NUCLEOTIDE SEQUENCE [LARGE SCALE GENOMIC DNA]</scope>
    <source>
        <strain>CLIP80459</strain>
    </source>
</reference>
<dbReference type="EMBL" id="FM242711">
    <property type="protein sequence ID" value="CAS03990.1"/>
    <property type="molecule type" value="Genomic_DNA"/>
</dbReference>
<dbReference type="RefSeq" id="WP_003740376.1">
    <property type="nucleotide sequence ID" value="NC_012488.1"/>
</dbReference>
<dbReference type="SMR" id="C1KYD5"/>
<dbReference type="KEGG" id="lmc:Lm4b_00200"/>
<dbReference type="HOGENOM" id="CLU_026912_0_0_9"/>
<dbReference type="GO" id="GO:0005576">
    <property type="term" value="C:extracellular region"/>
    <property type="evidence" value="ECO:0007669"/>
    <property type="project" value="UniProtKB-SubCell"/>
</dbReference>
<dbReference type="GO" id="GO:0020002">
    <property type="term" value="C:host cell plasma membrane"/>
    <property type="evidence" value="ECO:0007669"/>
    <property type="project" value="UniProtKB-SubCell"/>
</dbReference>
<dbReference type="GO" id="GO:0016020">
    <property type="term" value="C:membrane"/>
    <property type="evidence" value="ECO:0007669"/>
    <property type="project" value="UniProtKB-KW"/>
</dbReference>
<dbReference type="GO" id="GO:0015485">
    <property type="term" value="F:cholesterol binding"/>
    <property type="evidence" value="ECO:0007669"/>
    <property type="project" value="InterPro"/>
</dbReference>
<dbReference type="GO" id="GO:0090729">
    <property type="term" value="F:toxin activity"/>
    <property type="evidence" value="ECO:0007669"/>
    <property type="project" value="UniProtKB-KW"/>
</dbReference>
<dbReference type="GO" id="GO:0031640">
    <property type="term" value="P:killing of cells of another organism"/>
    <property type="evidence" value="ECO:0007669"/>
    <property type="project" value="UniProtKB-KW"/>
</dbReference>
<dbReference type="FunFam" id="2.60.40.1430:FF:000001">
    <property type="entry name" value="Thiol-activated cytolysin"/>
    <property type="match status" value="1"/>
</dbReference>
<dbReference type="Gene3D" id="3.30.1040.20">
    <property type="match status" value="1"/>
</dbReference>
<dbReference type="Gene3D" id="3.40.30.40">
    <property type="entry name" value="Perfringolysin"/>
    <property type="match status" value="1"/>
</dbReference>
<dbReference type="Gene3D" id="2.60.40.1430">
    <property type="entry name" value="Perfringolysin, domain 4"/>
    <property type="match status" value="1"/>
</dbReference>
<dbReference type="Gene3D" id="3.90.840.10">
    <property type="entry name" value="Thiol-activated cytolysin superfamily/Thiol-activated cytolysin, alpha-beta domain"/>
    <property type="match status" value="1"/>
</dbReference>
<dbReference type="InterPro" id="IPR035390">
    <property type="entry name" value="Thiol_cytolys_C"/>
</dbReference>
<dbReference type="InterPro" id="IPR038700">
    <property type="entry name" value="Thiol_cytolys_C_sf"/>
</dbReference>
<dbReference type="InterPro" id="IPR001869">
    <property type="entry name" value="Thiol_cytolysin"/>
</dbReference>
<dbReference type="InterPro" id="IPR036363">
    <property type="entry name" value="Thiol_cytolysin_ab_sf"/>
</dbReference>
<dbReference type="InterPro" id="IPR036359">
    <property type="entry name" value="Thiol_cytolysin_sf"/>
</dbReference>
<dbReference type="Pfam" id="PF17440">
    <property type="entry name" value="Thiol_cytolys_C"/>
    <property type="match status" value="1"/>
</dbReference>
<dbReference type="Pfam" id="PF01289">
    <property type="entry name" value="Thiol_cytolysin"/>
    <property type="match status" value="1"/>
</dbReference>
<dbReference type="PRINTS" id="PR01400">
    <property type="entry name" value="TACYTOLYSIN"/>
</dbReference>
<dbReference type="SUPFAM" id="SSF56978">
    <property type="entry name" value="Perfringolysin"/>
    <property type="match status" value="1"/>
</dbReference>
<dbReference type="PROSITE" id="PS00481">
    <property type="entry name" value="THIOL_CYTOLYSINS"/>
    <property type="match status" value="1"/>
</dbReference>